<organism>
    <name type="scientific">Oryza nivara</name>
    <name type="common">Indian wild rice</name>
    <name type="synonym">Oryza sativa f. spontanea</name>
    <dbReference type="NCBI Taxonomy" id="4536"/>
    <lineage>
        <taxon>Eukaryota</taxon>
        <taxon>Viridiplantae</taxon>
        <taxon>Streptophyta</taxon>
        <taxon>Embryophyta</taxon>
        <taxon>Tracheophyta</taxon>
        <taxon>Spermatophyta</taxon>
        <taxon>Magnoliopsida</taxon>
        <taxon>Liliopsida</taxon>
        <taxon>Poales</taxon>
        <taxon>Poaceae</taxon>
        <taxon>BOP clade</taxon>
        <taxon>Oryzoideae</taxon>
        <taxon>Oryzeae</taxon>
        <taxon>Oryzinae</taxon>
        <taxon>Oryza</taxon>
    </lineage>
</organism>
<accession>Q6ENH8</accession>
<reference key="1">
    <citation type="journal article" date="2004" name="Gene">
        <title>The complete nucleotide sequence of wild rice (Oryza nivara) chloroplast genome: first genome wide comparative sequence analysis of wild and cultivated rice.</title>
        <authorList>
            <person name="Masood M.S."/>
            <person name="Nishikawa T."/>
            <person name="Fukuoka S."/>
            <person name="Njenga P.K."/>
            <person name="Tsudzuki T."/>
            <person name="Kadowaki K."/>
        </authorList>
    </citation>
    <scope>NUCLEOTIDE SEQUENCE [LARGE SCALE GENOMIC DNA]</scope>
    <source>
        <strain evidence="2">cv. SL10</strain>
    </source>
</reference>
<feature type="chain" id="PRO_0000082418" description="ATP synthase subunit b, chloroplastic">
    <location>
        <begin position="1"/>
        <end position="183"/>
    </location>
</feature>
<feature type="transmembrane region" description="Helical" evidence="1">
    <location>
        <begin position="27"/>
        <end position="49"/>
    </location>
</feature>
<sequence length="183" mass="20956">MKNVTHSFVFLAHWPSAGSFGLNTDILATNLINLTVVVGVLIYFGKGVLKDLLDNRKQRILSTIRNSEELRRGTIEQLEKARIRLQKVELEADEYRMNGYSEIEREKANLINATSISLEQLEKSKNETLYFEKQRAMNQVRQRVFQQAVQGALGTLNSCLNTELHFRTIRANISILGAMEWKS</sequence>
<proteinExistence type="inferred from homology"/>
<keyword id="KW-0066">ATP synthesis</keyword>
<keyword id="KW-0067">ATP-binding</keyword>
<keyword id="KW-0138">CF(0)</keyword>
<keyword id="KW-0150">Chloroplast</keyword>
<keyword id="KW-0375">Hydrogen ion transport</keyword>
<keyword id="KW-0406">Ion transport</keyword>
<keyword id="KW-0472">Membrane</keyword>
<keyword id="KW-0547">Nucleotide-binding</keyword>
<keyword id="KW-0934">Plastid</keyword>
<keyword id="KW-1185">Reference proteome</keyword>
<keyword id="KW-0793">Thylakoid</keyword>
<keyword id="KW-0812">Transmembrane</keyword>
<keyword id="KW-1133">Transmembrane helix</keyword>
<keyword id="KW-0813">Transport</keyword>
<dbReference type="EMBL" id="AP006728">
    <property type="protein sequence ID" value="BAD26774.1"/>
    <property type="molecule type" value="Genomic_DNA"/>
</dbReference>
<dbReference type="RefSeq" id="YP_052745.1">
    <property type="nucleotide sequence ID" value="NC_005973.1"/>
</dbReference>
<dbReference type="SMR" id="Q6ENH8"/>
<dbReference type="STRING" id="4536.Q6ENH8"/>
<dbReference type="GeneID" id="2885943"/>
<dbReference type="eggNOG" id="ENOG502S22I">
    <property type="taxonomic scope" value="Eukaryota"/>
</dbReference>
<dbReference type="Proteomes" id="UP000006591">
    <property type="component" value="Chloroplast"/>
</dbReference>
<dbReference type="GO" id="GO:0009535">
    <property type="term" value="C:chloroplast thylakoid membrane"/>
    <property type="evidence" value="ECO:0007669"/>
    <property type="project" value="UniProtKB-SubCell"/>
</dbReference>
<dbReference type="GO" id="GO:0009536">
    <property type="term" value="C:plastid"/>
    <property type="evidence" value="ECO:0000305"/>
    <property type="project" value="Gramene"/>
</dbReference>
<dbReference type="GO" id="GO:0045259">
    <property type="term" value="C:proton-transporting ATP synthase complex"/>
    <property type="evidence" value="ECO:0007669"/>
    <property type="project" value="UniProtKB-KW"/>
</dbReference>
<dbReference type="GO" id="GO:0005524">
    <property type="term" value="F:ATP binding"/>
    <property type="evidence" value="ECO:0007669"/>
    <property type="project" value="UniProtKB-KW"/>
</dbReference>
<dbReference type="GO" id="GO:0046933">
    <property type="term" value="F:proton-transporting ATP synthase activity, rotational mechanism"/>
    <property type="evidence" value="ECO:0007669"/>
    <property type="project" value="UniProtKB-UniRule"/>
</dbReference>
<dbReference type="CDD" id="cd06503">
    <property type="entry name" value="ATP-synt_Fo_b"/>
    <property type="match status" value="1"/>
</dbReference>
<dbReference type="HAMAP" id="MF_01398">
    <property type="entry name" value="ATP_synth_b_bprime"/>
    <property type="match status" value="1"/>
</dbReference>
<dbReference type="InterPro" id="IPR002146">
    <property type="entry name" value="ATP_synth_b/b'su_bac/chlpt"/>
</dbReference>
<dbReference type="PANTHER" id="PTHR34264">
    <property type="entry name" value="ATP SYNTHASE SUBUNIT B, CHLOROPLASTIC"/>
    <property type="match status" value="1"/>
</dbReference>
<dbReference type="PANTHER" id="PTHR34264:SF8">
    <property type="entry name" value="ATP SYNTHASE SUBUNIT B, CHLOROPLASTIC"/>
    <property type="match status" value="1"/>
</dbReference>
<dbReference type="Pfam" id="PF00430">
    <property type="entry name" value="ATP-synt_B"/>
    <property type="match status" value="1"/>
</dbReference>
<name>ATPF_ORYNI</name>
<evidence type="ECO:0000255" key="1">
    <source>
        <dbReference type="HAMAP-Rule" id="MF_01398"/>
    </source>
</evidence>
<evidence type="ECO:0000312" key="2">
    <source>
        <dbReference type="Proteomes" id="UP000006591"/>
    </source>
</evidence>
<gene>
    <name evidence="1" type="primary">atpF</name>
</gene>
<geneLocation type="chloroplast"/>
<comment type="function">
    <text evidence="1">F(1)F(0) ATP synthase produces ATP from ADP in the presence of a proton or sodium gradient. F-type ATPases consist of two structural domains, F(1) containing the extramembraneous catalytic core and F(0) containing the membrane proton channel, linked together by a central stalk and a peripheral stalk. During catalysis, ATP synthesis in the catalytic domain of F(1) is coupled via a rotary mechanism of the central stalk subunits to proton translocation.</text>
</comment>
<comment type="function">
    <text evidence="1">Component of the F(0) channel, it forms part of the peripheral stalk, linking F(1) to F(0).</text>
</comment>
<comment type="subunit">
    <text evidence="1">F-type ATPases have 2 components, F(1) - the catalytic core - and F(0) - the membrane proton channel. F(1) has five subunits: alpha(3), beta(3), gamma(1), delta(1), epsilon(1). F(0) has four main subunits: a(1), b(1), b'(1) and c(10-14). The alpha and beta chains form an alternating ring which encloses part of the gamma chain. F(1) is attached to F(0) by a central stalk formed by the gamma and epsilon chains, while a peripheral stalk is formed by the delta, b and b' chains.</text>
</comment>
<comment type="subcellular location">
    <subcellularLocation>
        <location evidence="1">Plastid</location>
        <location evidence="1">Chloroplast thylakoid membrane</location>
        <topology evidence="1">Single-pass membrane protein</topology>
    </subcellularLocation>
</comment>
<comment type="miscellaneous">
    <text>In plastids the F-type ATPase is also known as CF(1)CF(0).</text>
</comment>
<comment type="similarity">
    <text evidence="1">Belongs to the ATPase B chain family.</text>
</comment>
<protein>
    <recommendedName>
        <fullName evidence="1">ATP synthase subunit b, chloroplastic</fullName>
    </recommendedName>
    <alternativeName>
        <fullName evidence="1">ATP synthase F(0) sector subunit b</fullName>
    </alternativeName>
    <alternativeName>
        <fullName evidence="1">ATPase subunit I</fullName>
    </alternativeName>
</protein>